<accession>Q5HVN3</accession>
<organism>
    <name type="scientific">Campylobacter jejuni (strain RM1221)</name>
    <dbReference type="NCBI Taxonomy" id="195099"/>
    <lineage>
        <taxon>Bacteria</taxon>
        <taxon>Pseudomonadati</taxon>
        <taxon>Campylobacterota</taxon>
        <taxon>Epsilonproteobacteria</taxon>
        <taxon>Campylobacterales</taxon>
        <taxon>Campylobacteraceae</taxon>
        <taxon>Campylobacter</taxon>
    </lineage>
</organism>
<reference key="1">
    <citation type="journal article" date="2005" name="PLoS Biol.">
        <title>Major structural differences and novel potential virulence mechanisms from the genomes of multiple Campylobacter species.</title>
        <authorList>
            <person name="Fouts D.E."/>
            <person name="Mongodin E.F."/>
            <person name="Mandrell R.E."/>
            <person name="Miller W.G."/>
            <person name="Rasko D.A."/>
            <person name="Ravel J."/>
            <person name="Brinkac L.M."/>
            <person name="DeBoy R.T."/>
            <person name="Parker C.T."/>
            <person name="Daugherty S.C."/>
            <person name="Dodson R.J."/>
            <person name="Durkin A.S."/>
            <person name="Madupu R."/>
            <person name="Sullivan S.A."/>
            <person name="Shetty J.U."/>
            <person name="Ayodeji M.A."/>
            <person name="Shvartsbeyn A."/>
            <person name="Schatz M.C."/>
            <person name="Badger J.H."/>
            <person name="Fraser C.M."/>
            <person name="Nelson K.E."/>
        </authorList>
    </citation>
    <scope>NUCLEOTIDE SEQUENCE [LARGE SCALE GENOMIC DNA]</scope>
    <source>
        <strain>RM1221</strain>
    </source>
</reference>
<evidence type="ECO:0000255" key="1">
    <source>
        <dbReference type="HAMAP-Rule" id="MF_00558"/>
    </source>
</evidence>
<evidence type="ECO:0007829" key="2">
    <source>
        <dbReference type="PDB" id="6MEL"/>
    </source>
</evidence>
<feature type="chain" id="PRO_1000082056" description="Succinate--CoA ligase [ADP-forming] subunit beta">
    <location>
        <begin position="1"/>
        <end position="387"/>
    </location>
</feature>
<feature type="binding site" evidence="1">
    <location>
        <position position="46"/>
    </location>
    <ligand>
        <name>ATP</name>
        <dbReference type="ChEBI" id="CHEBI:30616"/>
    </ligand>
</feature>
<feature type="binding site" evidence="1">
    <location>
        <begin position="53"/>
        <end position="55"/>
    </location>
    <ligand>
        <name>ATP</name>
        <dbReference type="ChEBI" id="CHEBI:30616"/>
    </ligand>
</feature>
<feature type="binding site" evidence="1">
    <location>
        <position position="99"/>
    </location>
    <ligand>
        <name>ATP</name>
        <dbReference type="ChEBI" id="CHEBI:30616"/>
    </ligand>
</feature>
<feature type="binding site" evidence="1">
    <location>
        <position position="102"/>
    </location>
    <ligand>
        <name>ATP</name>
        <dbReference type="ChEBI" id="CHEBI:30616"/>
    </ligand>
</feature>
<feature type="binding site" evidence="1">
    <location>
        <position position="107"/>
    </location>
    <ligand>
        <name>ATP</name>
        <dbReference type="ChEBI" id="CHEBI:30616"/>
    </ligand>
</feature>
<feature type="binding site" evidence="1">
    <location>
        <position position="199"/>
    </location>
    <ligand>
        <name>Mg(2+)</name>
        <dbReference type="ChEBI" id="CHEBI:18420"/>
    </ligand>
</feature>
<feature type="binding site" evidence="1">
    <location>
        <position position="213"/>
    </location>
    <ligand>
        <name>Mg(2+)</name>
        <dbReference type="ChEBI" id="CHEBI:18420"/>
    </ligand>
</feature>
<feature type="binding site" evidence="1">
    <location>
        <position position="264"/>
    </location>
    <ligand>
        <name>substrate</name>
        <note>ligand shared with subunit alpha</note>
    </ligand>
</feature>
<feature type="binding site" evidence="1">
    <location>
        <begin position="321"/>
        <end position="323"/>
    </location>
    <ligand>
        <name>substrate</name>
        <note>ligand shared with subunit alpha</note>
    </ligand>
</feature>
<feature type="helix" evidence="2">
    <location>
        <begin position="5"/>
        <end position="14"/>
    </location>
</feature>
<feature type="strand" evidence="2">
    <location>
        <begin position="22"/>
        <end position="27"/>
    </location>
</feature>
<feature type="helix" evidence="2">
    <location>
        <begin position="28"/>
        <end position="38"/>
    </location>
</feature>
<feature type="strand" evidence="2">
    <location>
        <begin position="43"/>
        <end position="47"/>
    </location>
</feature>
<feature type="strand" evidence="2">
    <location>
        <begin position="50"/>
        <end position="52"/>
    </location>
</feature>
<feature type="helix" evidence="2">
    <location>
        <begin position="54"/>
        <end position="57"/>
    </location>
</feature>
<feature type="strand" evidence="2">
    <location>
        <begin position="60"/>
        <end position="65"/>
    </location>
</feature>
<feature type="helix" evidence="2">
    <location>
        <begin position="66"/>
        <end position="76"/>
    </location>
</feature>
<feature type="turn" evidence="2">
    <location>
        <begin position="84"/>
        <end position="86"/>
    </location>
</feature>
<feature type="strand" evidence="2">
    <location>
        <begin position="96"/>
        <end position="100"/>
    </location>
</feature>
<feature type="strand" evidence="2">
    <location>
        <begin position="104"/>
        <end position="115"/>
    </location>
</feature>
<feature type="turn" evidence="2">
    <location>
        <begin position="116"/>
        <end position="119"/>
    </location>
</feature>
<feature type="strand" evidence="2">
    <location>
        <begin position="120"/>
        <end position="127"/>
    </location>
</feature>
<feature type="helix" evidence="2">
    <location>
        <begin position="133"/>
        <end position="139"/>
    </location>
</feature>
<feature type="helix" evidence="2">
    <location>
        <begin position="141"/>
        <end position="143"/>
    </location>
</feature>
<feature type="strand" evidence="2">
    <location>
        <begin position="144"/>
        <end position="149"/>
    </location>
</feature>
<feature type="turn" evidence="2">
    <location>
        <begin position="151"/>
        <end position="153"/>
    </location>
</feature>
<feature type="helix" evidence="2">
    <location>
        <begin position="157"/>
        <end position="166"/>
    </location>
</feature>
<feature type="helix" evidence="2">
    <location>
        <begin position="171"/>
        <end position="190"/>
    </location>
</feature>
<feature type="strand" evidence="2">
    <location>
        <begin position="193"/>
        <end position="204"/>
    </location>
</feature>
<feature type="strand" evidence="2">
    <location>
        <begin position="209"/>
        <end position="213"/>
    </location>
</feature>
<feature type="strand" evidence="2">
    <location>
        <begin position="215"/>
        <end position="218"/>
    </location>
</feature>
<feature type="helix" evidence="2">
    <location>
        <begin position="220"/>
        <end position="225"/>
    </location>
</feature>
<feature type="helix" evidence="2">
    <location>
        <begin position="227"/>
        <end position="230"/>
    </location>
</feature>
<feature type="helix" evidence="2">
    <location>
        <begin position="235"/>
        <end position="237"/>
    </location>
</feature>
<feature type="helix" evidence="2">
    <location>
        <begin position="240"/>
        <end position="247"/>
    </location>
</feature>
<feature type="strand" evidence="2">
    <location>
        <begin position="251"/>
        <end position="254"/>
    </location>
</feature>
<feature type="strand" evidence="2">
    <location>
        <begin position="256"/>
        <end position="265"/>
    </location>
</feature>
<feature type="helix" evidence="2">
    <location>
        <begin position="266"/>
        <end position="278"/>
    </location>
</feature>
<feature type="strand" evidence="2">
    <location>
        <begin position="285"/>
        <end position="288"/>
    </location>
</feature>
<feature type="helix" evidence="2">
    <location>
        <begin position="295"/>
        <end position="305"/>
    </location>
</feature>
<feature type="strand" evidence="2">
    <location>
        <begin position="313"/>
        <end position="323"/>
    </location>
</feature>
<feature type="helix" evidence="2">
    <location>
        <begin position="325"/>
        <end position="335"/>
    </location>
</feature>
<feature type="turn" evidence="2">
    <location>
        <begin position="336"/>
        <end position="338"/>
    </location>
</feature>
<feature type="strand" evidence="2">
    <location>
        <begin position="345"/>
        <end position="351"/>
    </location>
</feature>
<feature type="helix" evidence="2">
    <location>
        <begin position="354"/>
        <end position="363"/>
    </location>
</feature>
<feature type="strand" evidence="2">
    <location>
        <begin position="369"/>
        <end position="374"/>
    </location>
</feature>
<feature type="helix" evidence="2">
    <location>
        <begin position="375"/>
        <end position="385"/>
    </location>
</feature>
<sequence>MNIHEYQAKAIFVDNGIPTLKGKVAFSVDEAVANAKELGGSVWAVKAQIHAGGRGLGGGVKIAKNLDEVKDYASKILGMNLVTHQTGPEGKLVQKLYIESGANIVKEYYLAILFNRMAEQITIIASSEGGMDIEKVAKESPEKIAKVGIDPQIGFKMFHGLEVARVLGLDKDEGKKLISMIAKLYKLYMDKDMNMLEINPLIKTAEGDFYALDAKCSFDDSALYRHPEIAELRDTTEENPAEREAAEFGLSYVKLDGDVACMVNGAGLAMATMDIINYSGAKPANFLDVGGGASPETVAKAFEIILRDKNVKVIFINIFGGIVRCDRIANGILEATKNVEVNIPIVVRLDGTNAAEAKTILDNSNLKNIKAATNLKNGAELVKSLVG</sequence>
<comment type="function">
    <text evidence="1">Succinyl-CoA synthetase functions in the citric acid cycle (TCA), coupling the hydrolysis of succinyl-CoA to the synthesis of either ATP or GTP and thus represents the only step of substrate-level phosphorylation in the TCA. The beta subunit provides nucleotide specificity of the enzyme and binds the substrate succinate, while the binding sites for coenzyme A and phosphate are found in the alpha subunit.</text>
</comment>
<comment type="catalytic activity">
    <reaction evidence="1">
        <text>succinate + ATP + CoA = succinyl-CoA + ADP + phosphate</text>
        <dbReference type="Rhea" id="RHEA:17661"/>
        <dbReference type="ChEBI" id="CHEBI:30031"/>
        <dbReference type="ChEBI" id="CHEBI:30616"/>
        <dbReference type="ChEBI" id="CHEBI:43474"/>
        <dbReference type="ChEBI" id="CHEBI:57287"/>
        <dbReference type="ChEBI" id="CHEBI:57292"/>
        <dbReference type="ChEBI" id="CHEBI:456216"/>
        <dbReference type="EC" id="6.2.1.5"/>
    </reaction>
    <physiologicalReaction direction="right-to-left" evidence="1">
        <dbReference type="Rhea" id="RHEA:17663"/>
    </physiologicalReaction>
</comment>
<comment type="catalytic activity">
    <reaction evidence="1">
        <text>GTP + succinate + CoA = succinyl-CoA + GDP + phosphate</text>
        <dbReference type="Rhea" id="RHEA:22120"/>
        <dbReference type="ChEBI" id="CHEBI:30031"/>
        <dbReference type="ChEBI" id="CHEBI:37565"/>
        <dbReference type="ChEBI" id="CHEBI:43474"/>
        <dbReference type="ChEBI" id="CHEBI:57287"/>
        <dbReference type="ChEBI" id="CHEBI:57292"/>
        <dbReference type="ChEBI" id="CHEBI:58189"/>
    </reaction>
    <physiologicalReaction direction="right-to-left" evidence="1">
        <dbReference type="Rhea" id="RHEA:22122"/>
    </physiologicalReaction>
</comment>
<comment type="cofactor">
    <cofactor evidence="1">
        <name>Mg(2+)</name>
        <dbReference type="ChEBI" id="CHEBI:18420"/>
    </cofactor>
    <text evidence="1">Binds 1 Mg(2+) ion per subunit.</text>
</comment>
<comment type="pathway">
    <text evidence="1">Carbohydrate metabolism; tricarboxylic acid cycle; succinate from succinyl-CoA (ligase route): step 1/1.</text>
</comment>
<comment type="subunit">
    <text evidence="1">Heterotetramer of two alpha and two beta subunits.</text>
</comment>
<comment type="similarity">
    <text evidence="1">Belongs to the succinate/malate CoA ligase beta subunit family.</text>
</comment>
<dbReference type="EC" id="6.2.1.5" evidence="1"/>
<dbReference type="EMBL" id="CP000025">
    <property type="protein sequence ID" value="AAW35850.1"/>
    <property type="molecule type" value="Genomic_DNA"/>
</dbReference>
<dbReference type="RefSeq" id="WP_002858590.1">
    <property type="nucleotide sequence ID" value="NC_003912.7"/>
</dbReference>
<dbReference type="PDB" id="6MEL">
    <property type="method" value="X-ray"/>
    <property type="resolution" value="2.06 A"/>
    <property type="chains" value="B=1-387"/>
</dbReference>
<dbReference type="PDBsum" id="6MEL"/>
<dbReference type="SMR" id="Q5HVN3"/>
<dbReference type="KEGG" id="cjr:CJE0637"/>
<dbReference type="HOGENOM" id="CLU_037430_0_2_7"/>
<dbReference type="UniPathway" id="UPA00223">
    <property type="reaction ID" value="UER00999"/>
</dbReference>
<dbReference type="GO" id="GO:0005829">
    <property type="term" value="C:cytosol"/>
    <property type="evidence" value="ECO:0007669"/>
    <property type="project" value="TreeGrafter"/>
</dbReference>
<dbReference type="GO" id="GO:0042709">
    <property type="term" value="C:succinate-CoA ligase complex"/>
    <property type="evidence" value="ECO:0007669"/>
    <property type="project" value="TreeGrafter"/>
</dbReference>
<dbReference type="GO" id="GO:0005524">
    <property type="term" value="F:ATP binding"/>
    <property type="evidence" value="ECO:0007669"/>
    <property type="project" value="UniProtKB-UniRule"/>
</dbReference>
<dbReference type="GO" id="GO:0000287">
    <property type="term" value="F:magnesium ion binding"/>
    <property type="evidence" value="ECO:0007669"/>
    <property type="project" value="UniProtKB-UniRule"/>
</dbReference>
<dbReference type="GO" id="GO:0004775">
    <property type="term" value="F:succinate-CoA ligase (ADP-forming) activity"/>
    <property type="evidence" value="ECO:0007669"/>
    <property type="project" value="UniProtKB-UniRule"/>
</dbReference>
<dbReference type="GO" id="GO:0004776">
    <property type="term" value="F:succinate-CoA ligase (GDP-forming) activity"/>
    <property type="evidence" value="ECO:0007669"/>
    <property type="project" value="RHEA"/>
</dbReference>
<dbReference type="GO" id="GO:0006104">
    <property type="term" value="P:succinyl-CoA metabolic process"/>
    <property type="evidence" value="ECO:0007669"/>
    <property type="project" value="TreeGrafter"/>
</dbReference>
<dbReference type="GO" id="GO:0006099">
    <property type="term" value="P:tricarboxylic acid cycle"/>
    <property type="evidence" value="ECO:0007669"/>
    <property type="project" value="UniProtKB-UniRule"/>
</dbReference>
<dbReference type="FunFam" id="3.30.1490.20:FF:000002">
    <property type="entry name" value="Succinate--CoA ligase [ADP-forming] subunit beta"/>
    <property type="match status" value="1"/>
</dbReference>
<dbReference type="FunFam" id="3.30.470.20:FF:000002">
    <property type="entry name" value="Succinate--CoA ligase [ADP-forming] subunit beta"/>
    <property type="match status" value="1"/>
</dbReference>
<dbReference type="FunFam" id="3.40.50.261:FF:000001">
    <property type="entry name" value="Succinate--CoA ligase [ADP-forming] subunit beta"/>
    <property type="match status" value="1"/>
</dbReference>
<dbReference type="Gene3D" id="3.30.1490.20">
    <property type="entry name" value="ATP-grasp fold, A domain"/>
    <property type="match status" value="1"/>
</dbReference>
<dbReference type="Gene3D" id="3.30.470.20">
    <property type="entry name" value="ATP-grasp fold, B domain"/>
    <property type="match status" value="1"/>
</dbReference>
<dbReference type="Gene3D" id="3.40.50.261">
    <property type="entry name" value="Succinyl-CoA synthetase domains"/>
    <property type="match status" value="1"/>
</dbReference>
<dbReference type="HAMAP" id="MF_00558">
    <property type="entry name" value="Succ_CoA_beta"/>
    <property type="match status" value="1"/>
</dbReference>
<dbReference type="InterPro" id="IPR013650">
    <property type="entry name" value="ATP-grasp_succ-CoA_synth-type"/>
</dbReference>
<dbReference type="InterPro" id="IPR013815">
    <property type="entry name" value="ATP_grasp_subdomain_1"/>
</dbReference>
<dbReference type="InterPro" id="IPR017866">
    <property type="entry name" value="Succ-CoA_synthase_bsu_CS"/>
</dbReference>
<dbReference type="InterPro" id="IPR005811">
    <property type="entry name" value="SUCC_ACL_C"/>
</dbReference>
<dbReference type="InterPro" id="IPR005809">
    <property type="entry name" value="Succ_CoA_ligase-like_bsu"/>
</dbReference>
<dbReference type="InterPro" id="IPR016102">
    <property type="entry name" value="Succinyl-CoA_synth-like"/>
</dbReference>
<dbReference type="NCBIfam" id="NF001913">
    <property type="entry name" value="PRK00696.1"/>
    <property type="match status" value="1"/>
</dbReference>
<dbReference type="NCBIfam" id="TIGR01016">
    <property type="entry name" value="sucCoAbeta"/>
    <property type="match status" value="1"/>
</dbReference>
<dbReference type="PANTHER" id="PTHR11815:SF10">
    <property type="entry name" value="SUCCINATE--COA LIGASE [GDP-FORMING] SUBUNIT BETA, MITOCHONDRIAL"/>
    <property type="match status" value="1"/>
</dbReference>
<dbReference type="PANTHER" id="PTHR11815">
    <property type="entry name" value="SUCCINYL-COA SYNTHETASE BETA CHAIN"/>
    <property type="match status" value="1"/>
</dbReference>
<dbReference type="Pfam" id="PF08442">
    <property type="entry name" value="ATP-grasp_2"/>
    <property type="match status" value="1"/>
</dbReference>
<dbReference type="Pfam" id="PF00549">
    <property type="entry name" value="Ligase_CoA"/>
    <property type="match status" value="1"/>
</dbReference>
<dbReference type="PIRSF" id="PIRSF001554">
    <property type="entry name" value="SucCS_beta"/>
    <property type="match status" value="1"/>
</dbReference>
<dbReference type="SUPFAM" id="SSF56059">
    <property type="entry name" value="Glutathione synthetase ATP-binding domain-like"/>
    <property type="match status" value="1"/>
</dbReference>
<dbReference type="SUPFAM" id="SSF52210">
    <property type="entry name" value="Succinyl-CoA synthetase domains"/>
    <property type="match status" value="1"/>
</dbReference>
<dbReference type="PROSITE" id="PS01217">
    <property type="entry name" value="SUCCINYL_COA_LIG_3"/>
    <property type="match status" value="1"/>
</dbReference>
<protein>
    <recommendedName>
        <fullName evidence="1">Succinate--CoA ligase [ADP-forming] subunit beta</fullName>
        <ecNumber evidence="1">6.2.1.5</ecNumber>
    </recommendedName>
    <alternativeName>
        <fullName evidence="1">Succinyl-CoA synthetase subunit beta</fullName>
        <shortName evidence="1">SCS-beta</shortName>
    </alternativeName>
</protein>
<gene>
    <name evidence="1" type="primary">sucC</name>
    <name type="ordered locus">CJE0637</name>
</gene>
<proteinExistence type="evidence at protein level"/>
<keyword id="KW-0002">3D-structure</keyword>
<keyword id="KW-0067">ATP-binding</keyword>
<keyword id="KW-0436">Ligase</keyword>
<keyword id="KW-0460">Magnesium</keyword>
<keyword id="KW-0479">Metal-binding</keyword>
<keyword id="KW-0547">Nucleotide-binding</keyword>
<keyword id="KW-0816">Tricarboxylic acid cycle</keyword>
<name>SUCC_CAMJR</name>